<name>TM1L2_HUMAN</name>
<keyword id="KW-0025">Alternative splicing</keyword>
<keyword id="KW-0597">Phosphoprotein</keyword>
<keyword id="KW-0653">Protein transport</keyword>
<keyword id="KW-1267">Proteomics identification</keyword>
<keyword id="KW-1185">Reference proteome</keyword>
<keyword id="KW-0813">Transport</keyword>
<dbReference type="EMBL" id="AF467441">
    <property type="protein sequence ID" value="AAL78338.1"/>
    <property type="status" value="ALT_SEQ"/>
    <property type="molecule type" value="mRNA"/>
</dbReference>
<dbReference type="EMBL" id="AK057308">
    <property type="protein sequence ID" value="BAB71421.1"/>
    <property type="molecule type" value="mRNA"/>
</dbReference>
<dbReference type="EMBL" id="AK124331">
    <property type="protein sequence ID" value="BAC85834.1"/>
    <property type="molecule type" value="mRNA"/>
</dbReference>
<dbReference type="EMBL" id="AK294846">
    <property type="protein sequence ID" value="BAH11903.1"/>
    <property type="molecule type" value="mRNA"/>
</dbReference>
<dbReference type="EMBL" id="AK301944">
    <property type="protein sequence ID" value="BAH13590.1"/>
    <property type="molecule type" value="mRNA"/>
</dbReference>
<dbReference type="EMBL" id="AC087163">
    <property type="status" value="NOT_ANNOTATED_CDS"/>
    <property type="molecule type" value="Genomic_DNA"/>
</dbReference>
<dbReference type="EMBL" id="AC122129">
    <property type="status" value="NOT_ANNOTATED_CDS"/>
    <property type="molecule type" value="Genomic_DNA"/>
</dbReference>
<dbReference type="EMBL" id="KF456255">
    <property type="status" value="NOT_ANNOTATED_CDS"/>
    <property type="molecule type" value="Genomic_DNA"/>
</dbReference>
<dbReference type="EMBL" id="BC051650">
    <property type="protein sequence ID" value="AAH51650.1"/>
    <property type="molecule type" value="mRNA"/>
</dbReference>
<dbReference type="CCDS" id="CCDS32584.1">
    <molecule id="Q6ZVM7-2"/>
</dbReference>
<dbReference type="CCDS" id="CCDS42270.1">
    <molecule id="Q6ZVM7-1"/>
</dbReference>
<dbReference type="CCDS" id="CCDS74002.1">
    <molecule id="Q6ZVM7-3"/>
</dbReference>
<dbReference type="CCDS" id="CCDS74003.1">
    <molecule id="Q6ZVM7-5"/>
</dbReference>
<dbReference type="RefSeq" id="NP_001028723.1">
    <molecule id="Q6ZVM7-2"/>
    <property type="nucleotide sequence ID" value="NM_001033551.3"/>
</dbReference>
<dbReference type="RefSeq" id="NP_001076437.1">
    <molecule id="Q6ZVM7-1"/>
    <property type="nucleotide sequence ID" value="NM_001082968.2"/>
</dbReference>
<dbReference type="RefSeq" id="NP_001275715.1">
    <molecule id="Q6ZVM7-5"/>
    <property type="nucleotide sequence ID" value="NM_001288786.2"/>
</dbReference>
<dbReference type="RefSeq" id="NP_001275716.1">
    <molecule id="Q6ZVM7-3"/>
    <property type="nucleotide sequence ID" value="NM_001288787.2"/>
</dbReference>
<dbReference type="RefSeq" id="NP_001275717.1">
    <property type="nucleotide sequence ID" value="NM_001288788.1"/>
</dbReference>
<dbReference type="RefSeq" id="NP_001275718.1">
    <property type="nucleotide sequence ID" value="NM_001288789.1"/>
</dbReference>
<dbReference type="SMR" id="Q6ZVM7"/>
<dbReference type="BioGRID" id="127001">
    <property type="interactions" value="65"/>
</dbReference>
<dbReference type="DIP" id="DIP-61860N"/>
<dbReference type="FunCoup" id="Q6ZVM7">
    <property type="interactions" value="817"/>
</dbReference>
<dbReference type="IntAct" id="Q6ZVM7">
    <property type="interactions" value="27"/>
</dbReference>
<dbReference type="MINT" id="Q6ZVM7"/>
<dbReference type="STRING" id="9606.ENSP00000368818"/>
<dbReference type="GlyGen" id="Q6ZVM7">
    <property type="glycosylation" value="1 site, 1 O-linked glycan (1 site)"/>
</dbReference>
<dbReference type="iPTMnet" id="Q6ZVM7"/>
<dbReference type="PhosphoSitePlus" id="Q6ZVM7"/>
<dbReference type="SwissPalm" id="Q6ZVM7"/>
<dbReference type="BioMuta" id="TOM1L2"/>
<dbReference type="DMDM" id="74712301"/>
<dbReference type="jPOST" id="Q6ZVM7"/>
<dbReference type="MassIVE" id="Q6ZVM7"/>
<dbReference type="PaxDb" id="9606-ENSP00000368818"/>
<dbReference type="PeptideAtlas" id="Q6ZVM7"/>
<dbReference type="ProteomicsDB" id="6447"/>
<dbReference type="ProteomicsDB" id="68426">
    <molecule id="Q6ZVM7-1"/>
</dbReference>
<dbReference type="ProteomicsDB" id="68427">
    <molecule id="Q6ZVM7-2"/>
</dbReference>
<dbReference type="ProteomicsDB" id="68428">
    <molecule id="Q6ZVM7-3"/>
</dbReference>
<dbReference type="ProteomicsDB" id="68429">
    <molecule id="Q6ZVM7-4"/>
</dbReference>
<dbReference type="Pumba" id="Q6ZVM7"/>
<dbReference type="Antibodypedia" id="13414">
    <property type="antibodies" value="143 antibodies from 24 providers"/>
</dbReference>
<dbReference type="DNASU" id="146691"/>
<dbReference type="Ensembl" id="ENST00000318094.14">
    <molecule id="Q6ZVM7-3"/>
    <property type="protein sequence ID" value="ENSP00000312860.10"/>
    <property type="gene ID" value="ENSG00000175662.19"/>
</dbReference>
<dbReference type="Ensembl" id="ENST00000379504.8">
    <molecule id="Q6ZVM7-1"/>
    <property type="protein sequence ID" value="ENSP00000368818.3"/>
    <property type="gene ID" value="ENSG00000175662.19"/>
</dbReference>
<dbReference type="Ensembl" id="ENST00000395739.8">
    <molecule id="Q6ZVM7-3"/>
    <property type="protein sequence ID" value="ENSP00000379088.4"/>
    <property type="gene ID" value="ENSG00000175662.19"/>
</dbReference>
<dbReference type="Ensembl" id="ENST00000478943.5">
    <molecule id="Q6ZVM7-4"/>
    <property type="protein sequence ID" value="ENSP00000463313.1"/>
    <property type="gene ID" value="ENSG00000175662.19"/>
</dbReference>
<dbReference type="Ensembl" id="ENST00000535933.5">
    <molecule id="Q6ZVM7-5"/>
    <property type="protein sequence ID" value="ENSP00000438621.1"/>
    <property type="gene ID" value="ENSG00000175662.19"/>
</dbReference>
<dbReference type="Ensembl" id="ENST00000581396.6">
    <molecule id="Q6ZVM7-2"/>
    <property type="protein sequence ID" value="ENSP00000464297.1"/>
    <property type="gene ID" value="ENSG00000175662.19"/>
</dbReference>
<dbReference type="GeneID" id="146691"/>
<dbReference type="KEGG" id="hsa:146691"/>
<dbReference type="MANE-Select" id="ENST00000379504.8">
    <property type="protein sequence ID" value="ENSP00000368818.3"/>
    <property type="RefSeq nucleotide sequence ID" value="NM_001082968.2"/>
    <property type="RefSeq protein sequence ID" value="NP_001076437.1"/>
</dbReference>
<dbReference type="UCSC" id="uc002gry.5">
    <molecule id="Q6ZVM7-1"/>
    <property type="organism name" value="human"/>
</dbReference>
<dbReference type="AGR" id="HGNC:11984"/>
<dbReference type="CTD" id="146691"/>
<dbReference type="DisGeNET" id="146691"/>
<dbReference type="GeneCards" id="TOM1L2"/>
<dbReference type="HGNC" id="HGNC:11984">
    <property type="gene designation" value="TOM1L2"/>
</dbReference>
<dbReference type="HPA" id="ENSG00000175662">
    <property type="expression patterns" value="Low tissue specificity"/>
</dbReference>
<dbReference type="MIM" id="615519">
    <property type="type" value="gene"/>
</dbReference>
<dbReference type="neXtProt" id="NX_Q6ZVM7"/>
<dbReference type="OpenTargets" id="ENSG00000175662"/>
<dbReference type="PharmGKB" id="PA36668"/>
<dbReference type="VEuPathDB" id="HostDB:ENSG00000175662"/>
<dbReference type="eggNOG" id="KOG1087">
    <property type="taxonomic scope" value="Eukaryota"/>
</dbReference>
<dbReference type="GeneTree" id="ENSGT00940000156940"/>
<dbReference type="HOGENOM" id="CLU_932372_0_0_1"/>
<dbReference type="InParanoid" id="Q6ZVM7"/>
<dbReference type="OMA" id="VEMENWL"/>
<dbReference type="OrthoDB" id="2018246at2759"/>
<dbReference type="PAN-GO" id="Q6ZVM7">
    <property type="GO annotations" value="4 GO annotations based on evolutionary models"/>
</dbReference>
<dbReference type="PhylomeDB" id="Q6ZVM7"/>
<dbReference type="TreeFam" id="TF314105"/>
<dbReference type="PathwayCommons" id="Q6ZVM7"/>
<dbReference type="SignaLink" id="Q6ZVM7"/>
<dbReference type="SIGNOR" id="Q6ZVM7"/>
<dbReference type="BioGRID-ORCS" id="146691">
    <property type="hits" value="14 hits in 1154 CRISPR screens"/>
</dbReference>
<dbReference type="CD-CODE" id="FB4E32DD">
    <property type="entry name" value="Presynaptic clusters and postsynaptic densities"/>
</dbReference>
<dbReference type="ChiTaRS" id="TOM1L2">
    <property type="organism name" value="human"/>
</dbReference>
<dbReference type="GeneWiki" id="TOM1L2"/>
<dbReference type="GenomeRNAi" id="146691"/>
<dbReference type="Pharos" id="Q6ZVM7">
    <property type="development level" value="Tbio"/>
</dbReference>
<dbReference type="PRO" id="PR:Q6ZVM7"/>
<dbReference type="Proteomes" id="UP000005640">
    <property type="component" value="Chromosome 17"/>
</dbReference>
<dbReference type="RNAct" id="Q6ZVM7">
    <property type="molecule type" value="protein"/>
</dbReference>
<dbReference type="Bgee" id="ENSG00000175662">
    <property type="expression patterns" value="Expressed in sural nerve and 179 other cell types or tissues"/>
</dbReference>
<dbReference type="ExpressionAtlas" id="Q6ZVM7">
    <property type="expression patterns" value="baseline and differential"/>
</dbReference>
<dbReference type="GO" id="GO:0005768">
    <property type="term" value="C:endosome"/>
    <property type="evidence" value="ECO:0000318"/>
    <property type="project" value="GO_Central"/>
</dbReference>
<dbReference type="GO" id="GO:0070062">
    <property type="term" value="C:extracellular exosome"/>
    <property type="evidence" value="ECO:0007005"/>
    <property type="project" value="UniProtKB"/>
</dbReference>
<dbReference type="GO" id="GO:0016020">
    <property type="term" value="C:membrane"/>
    <property type="evidence" value="ECO:0000318"/>
    <property type="project" value="GO_Central"/>
</dbReference>
<dbReference type="GO" id="GO:0030276">
    <property type="term" value="F:clathrin binding"/>
    <property type="evidence" value="ECO:0000314"/>
    <property type="project" value="UniProtKB"/>
</dbReference>
<dbReference type="GO" id="GO:0035091">
    <property type="term" value="F:phosphatidylinositol binding"/>
    <property type="evidence" value="ECO:0007669"/>
    <property type="project" value="InterPro"/>
</dbReference>
<dbReference type="GO" id="GO:0019901">
    <property type="term" value="F:protein kinase binding"/>
    <property type="evidence" value="ECO:0000353"/>
    <property type="project" value="UniProtKB"/>
</dbReference>
<dbReference type="GO" id="GO:0043130">
    <property type="term" value="F:ubiquitin binding"/>
    <property type="evidence" value="ECO:0007669"/>
    <property type="project" value="InterPro"/>
</dbReference>
<dbReference type="GO" id="GO:0045839">
    <property type="term" value="P:negative regulation of mitotic nuclear division"/>
    <property type="evidence" value="ECO:0000314"/>
    <property type="project" value="UniProtKB"/>
</dbReference>
<dbReference type="GO" id="GO:0015031">
    <property type="term" value="P:protein transport"/>
    <property type="evidence" value="ECO:0007669"/>
    <property type="project" value="UniProtKB-KW"/>
</dbReference>
<dbReference type="GO" id="GO:0007165">
    <property type="term" value="P:signal transduction"/>
    <property type="evidence" value="ECO:0000314"/>
    <property type="project" value="UniProtKB"/>
</dbReference>
<dbReference type="CDD" id="cd14238">
    <property type="entry name" value="GAT_TM1L2"/>
    <property type="match status" value="1"/>
</dbReference>
<dbReference type="CDD" id="cd16996">
    <property type="entry name" value="VHS_Tom1L2"/>
    <property type="match status" value="1"/>
</dbReference>
<dbReference type="FunFam" id="1.20.58.160:FF:000001">
    <property type="entry name" value="TOM1-like protein 2 isoform X1"/>
    <property type="match status" value="1"/>
</dbReference>
<dbReference type="FunFam" id="1.25.40.90:FF:000003">
    <property type="entry name" value="TOM1-like protein 2 isoform X1"/>
    <property type="match status" value="1"/>
</dbReference>
<dbReference type="Gene3D" id="1.20.58.160">
    <property type="match status" value="1"/>
</dbReference>
<dbReference type="Gene3D" id="1.25.40.90">
    <property type="match status" value="1"/>
</dbReference>
<dbReference type="InterPro" id="IPR008942">
    <property type="entry name" value="ENTH_VHS"/>
</dbReference>
<dbReference type="InterPro" id="IPR004152">
    <property type="entry name" value="GAT_dom"/>
</dbReference>
<dbReference type="InterPro" id="IPR038425">
    <property type="entry name" value="GAT_sf"/>
</dbReference>
<dbReference type="InterPro" id="IPR014645">
    <property type="entry name" value="TOM1"/>
</dbReference>
<dbReference type="InterPro" id="IPR027429">
    <property type="entry name" value="TOM1L2_VHS_dom"/>
</dbReference>
<dbReference type="InterPro" id="IPR002014">
    <property type="entry name" value="VHS_dom"/>
</dbReference>
<dbReference type="PANTHER" id="PTHR13856:SF31">
    <property type="entry name" value="TOM1-LIKE PROTEIN 2"/>
    <property type="match status" value="1"/>
</dbReference>
<dbReference type="PANTHER" id="PTHR13856">
    <property type="entry name" value="VHS DOMAIN CONTAINING PROTEIN FAMILY"/>
    <property type="match status" value="1"/>
</dbReference>
<dbReference type="Pfam" id="PF03127">
    <property type="entry name" value="GAT"/>
    <property type="match status" value="1"/>
</dbReference>
<dbReference type="Pfam" id="PF00790">
    <property type="entry name" value="VHS"/>
    <property type="match status" value="1"/>
</dbReference>
<dbReference type="PIRSF" id="PIRSF036948">
    <property type="entry name" value="TOM1"/>
    <property type="match status" value="1"/>
</dbReference>
<dbReference type="SMART" id="SM00288">
    <property type="entry name" value="VHS"/>
    <property type="match status" value="1"/>
</dbReference>
<dbReference type="SUPFAM" id="SSF48464">
    <property type="entry name" value="ENTH/VHS domain"/>
    <property type="match status" value="1"/>
</dbReference>
<dbReference type="SUPFAM" id="SSF89009">
    <property type="entry name" value="GAT-like domain"/>
    <property type="match status" value="1"/>
</dbReference>
<dbReference type="PROSITE" id="PS50909">
    <property type="entry name" value="GAT"/>
    <property type="match status" value="1"/>
</dbReference>
<dbReference type="PROSITE" id="PS50179">
    <property type="entry name" value="VHS"/>
    <property type="match status" value="1"/>
</dbReference>
<reference key="1">
    <citation type="journal article" date="2002" name="Genome Res.">
        <title>Genes in a refined Smith-Magenis syndrome critical deletion interval on chromosome 17p11.2 and the syntenic region of the mouse.</title>
        <authorList>
            <person name="Bi W."/>
            <person name="Yan J."/>
            <person name="Stankiewicz P."/>
            <person name="Park S.-S."/>
            <person name="Walz K."/>
            <person name="Boerkoel C.F."/>
            <person name="Potocki L."/>
            <person name="Shaffer L.G."/>
            <person name="Devriendt K."/>
            <person name="Nowaczyk M.J.M."/>
            <person name="Inoue K."/>
            <person name="Lupski J.R."/>
        </authorList>
    </citation>
    <scope>NUCLEOTIDE SEQUENCE [MRNA] (ISOFORM 3)</scope>
    <scope>TISSUE SPECIFICITY</scope>
</reference>
<reference key="2">
    <citation type="journal article" date="2004" name="Nat. Genet.">
        <title>Complete sequencing and characterization of 21,243 full-length human cDNAs.</title>
        <authorList>
            <person name="Ota T."/>
            <person name="Suzuki Y."/>
            <person name="Nishikawa T."/>
            <person name="Otsuki T."/>
            <person name="Sugiyama T."/>
            <person name="Irie R."/>
            <person name="Wakamatsu A."/>
            <person name="Hayashi K."/>
            <person name="Sato H."/>
            <person name="Nagai K."/>
            <person name="Kimura K."/>
            <person name="Makita H."/>
            <person name="Sekine M."/>
            <person name="Obayashi M."/>
            <person name="Nishi T."/>
            <person name="Shibahara T."/>
            <person name="Tanaka T."/>
            <person name="Ishii S."/>
            <person name="Yamamoto J."/>
            <person name="Saito K."/>
            <person name="Kawai Y."/>
            <person name="Isono Y."/>
            <person name="Nakamura Y."/>
            <person name="Nagahari K."/>
            <person name="Murakami K."/>
            <person name="Yasuda T."/>
            <person name="Iwayanagi T."/>
            <person name="Wagatsuma M."/>
            <person name="Shiratori A."/>
            <person name="Sudo H."/>
            <person name="Hosoiri T."/>
            <person name="Kaku Y."/>
            <person name="Kodaira H."/>
            <person name="Kondo H."/>
            <person name="Sugawara M."/>
            <person name="Takahashi M."/>
            <person name="Kanda K."/>
            <person name="Yokoi T."/>
            <person name="Furuya T."/>
            <person name="Kikkawa E."/>
            <person name="Omura Y."/>
            <person name="Abe K."/>
            <person name="Kamihara K."/>
            <person name="Katsuta N."/>
            <person name="Sato K."/>
            <person name="Tanikawa M."/>
            <person name="Yamazaki M."/>
            <person name="Ninomiya K."/>
            <person name="Ishibashi T."/>
            <person name="Yamashita H."/>
            <person name="Murakawa K."/>
            <person name="Fujimori K."/>
            <person name="Tanai H."/>
            <person name="Kimata M."/>
            <person name="Watanabe M."/>
            <person name="Hiraoka S."/>
            <person name="Chiba Y."/>
            <person name="Ishida S."/>
            <person name="Ono Y."/>
            <person name="Takiguchi S."/>
            <person name="Watanabe S."/>
            <person name="Yosida M."/>
            <person name="Hotuta T."/>
            <person name="Kusano J."/>
            <person name="Kanehori K."/>
            <person name="Takahashi-Fujii A."/>
            <person name="Hara H."/>
            <person name="Tanase T.-O."/>
            <person name="Nomura Y."/>
            <person name="Togiya S."/>
            <person name="Komai F."/>
            <person name="Hara R."/>
            <person name="Takeuchi K."/>
            <person name="Arita M."/>
            <person name="Imose N."/>
            <person name="Musashino K."/>
            <person name="Yuuki H."/>
            <person name="Oshima A."/>
            <person name="Sasaki N."/>
            <person name="Aotsuka S."/>
            <person name="Yoshikawa Y."/>
            <person name="Matsunawa H."/>
            <person name="Ichihara T."/>
            <person name="Shiohata N."/>
            <person name="Sano S."/>
            <person name="Moriya S."/>
            <person name="Momiyama H."/>
            <person name="Satoh N."/>
            <person name="Takami S."/>
            <person name="Terashima Y."/>
            <person name="Suzuki O."/>
            <person name="Nakagawa S."/>
            <person name="Senoh A."/>
            <person name="Mizoguchi H."/>
            <person name="Goto Y."/>
            <person name="Shimizu F."/>
            <person name="Wakebe H."/>
            <person name="Hishigaki H."/>
            <person name="Watanabe T."/>
            <person name="Sugiyama A."/>
            <person name="Takemoto M."/>
            <person name="Kawakami B."/>
            <person name="Yamazaki M."/>
            <person name="Watanabe K."/>
            <person name="Kumagai A."/>
            <person name="Itakura S."/>
            <person name="Fukuzumi Y."/>
            <person name="Fujimori Y."/>
            <person name="Komiyama M."/>
            <person name="Tashiro H."/>
            <person name="Tanigami A."/>
            <person name="Fujiwara T."/>
            <person name="Ono T."/>
            <person name="Yamada K."/>
            <person name="Fujii Y."/>
            <person name="Ozaki K."/>
            <person name="Hirao M."/>
            <person name="Ohmori Y."/>
            <person name="Kawabata A."/>
            <person name="Hikiji T."/>
            <person name="Kobatake N."/>
            <person name="Inagaki H."/>
            <person name="Ikema Y."/>
            <person name="Okamoto S."/>
            <person name="Okitani R."/>
            <person name="Kawakami T."/>
            <person name="Noguchi S."/>
            <person name="Itoh T."/>
            <person name="Shigeta K."/>
            <person name="Senba T."/>
            <person name="Matsumura K."/>
            <person name="Nakajima Y."/>
            <person name="Mizuno T."/>
            <person name="Morinaga M."/>
            <person name="Sasaki M."/>
            <person name="Togashi T."/>
            <person name="Oyama M."/>
            <person name="Hata H."/>
            <person name="Watanabe M."/>
            <person name="Komatsu T."/>
            <person name="Mizushima-Sugano J."/>
            <person name="Satoh T."/>
            <person name="Shirai Y."/>
            <person name="Takahashi Y."/>
            <person name="Nakagawa K."/>
            <person name="Okumura K."/>
            <person name="Nagase T."/>
            <person name="Nomura N."/>
            <person name="Kikuchi H."/>
            <person name="Masuho Y."/>
            <person name="Yamashita R."/>
            <person name="Nakai K."/>
            <person name="Yada T."/>
            <person name="Nakamura Y."/>
            <person name="Ohara O."/>
            <person name="Isogai T."/>
            <person name="Sugano S."/>
        </authorList>
    </citation>
    <scope>NUCLEOTIDE SEQUENCE [LARGE SCALE MRNA] (ISOFORMS 1; 3; 4 AND 5)</scope>
    <source>
        <tissue>Brain</tissue>
        <tissue>Testis</tissue>
        <tissue>Uterus</tissue>
    </source>
</reference>
<reference key="3">
    <citation type="journal article" date="2006" name="Nature">
        <title>DNA sequence of human chromosome 17 and analysis of rearrangement in the human lineage.</title>
        <authorList>
            <person name="Zody M.C."/>
            <person name="Garber M."/>
            <person name="Adams D.J."/>
            <person name="Sharpe T."/>
            <person name="Harrow J."/>
            <person name="Lupski J.R."/>
            <person name="Nicholson C."/>
            <person name="Searle S.M."/>
            <person name="Wilming L."/>
            <person name="Young S.K."/>
            <person name="Abouelleil A."/>
            <person name="Allen N.R."/>
            <person name="Bi W."/>
            <person name="Bloom T."/>
            <person name="Borowsky M.L."/>
            <person name="Bugalter B.E."/>
            <person name="Butler J."/>
            <person name="Chang J.L."/>
            <person name="Chen C.-K."/>
            <person name="Cook A."/>
            <person name="Corum B."/>
            <person name="Cuomo C.A."/>
            <person name="de Jong P.J."/>
            <person name="DeCaprio D."/>
            <person name="Dewar K."/>
            <person name="FitzGerald M."/>
            <person name="Gilbert J."/>
            <person name="Gibson R."/>
            <person name="Gnerre S."/>
            <person name="Goldstein S."/>
            <person name="Grafham D.V."/>
            <person name="Grocock R."/>
            <person name="Hafez N."/>
            <person name="Hagopian D.S."/>
            <person name="Hart E."/>
            <person name="Norman C.H."/>
            <person name="Humphray S."/>
            <person name="Jaffe D.B."/>
            <person name="Jones M."/>
            <person name="Kamal M."/>
            <person name="Khodiyar V.K."/>
            <person name="LaButti K."/>
            <person name="Laird G."/>
            <person name="Lehoczky J."/>
            <person name="Liu X."/>
            <person name="Lokyitsang T."/>
            <person name="Loveland J."/>
            <person name="Lui A."/>
            <person name="Macdonald P."/>
            <person name="Major J.E."/>
            <person name="Matthews L."/>
            <person name="Mauceli E."/>
            <person name="McCarroll S.A."/>
            <person name="Mihalev A.H."/>
            <person name="Mudge J."/>
            <person name="Nguyen C."/>
            <person name="Nicol R."/>
            <person name="O'Leary S.B."/>
            <person name="Osoegawa K."/>
            <person name="Schwartz D.C."/>
            <person name="Shaw-Smith C."/>
            <person name="Stankiewicz P."/>
            <person name="Steward C."/>
            <person name="Swarbreck D."/>
            <person name="Venkataraman V."/>
            <person name="Whittaker C.A."/>
            <person name="Yang X."/>
            <person name="Zimmer A.R."/>
            <person name="Bradley A."/>
            <person name="Hubbard T."/>
            <person name="Birren B.W."/>
            <person name="Rogers J."/>
            <person name="Lander E.S."/>
            <person name="Nusbaum C."/>
        </authorList>
    </citation>
    <scope>NUCLEOTIDE SEQUENCE [LARGE SCALE GENOMIC DNA]</scope>
</reference>
<reference key="4">
    <citation type="journal article" date="2004" name="Genome Res.">
        <title>The status, quality, and expansion of the NIH full-length cDNA project: the Mammalian Gene Collection (MGC).</title>
        <authorList>
            <consortium name="The MGC Project Team"/>
        </authorList>
    </citation>
    <scope>NUCLEOTIDE SEQUENCE [LARGE SCALE MRNA] (ISOFORM 2)</scope>
    <source>
        <tissue>Testis</tissue>
    </source>
</reference>
<reference key="5">
    <citation type="journal article" date="2006" name="Biochem. Biophys. Res. Commun.">
        <title>Recruitment of clathrin onto endosomes by the Tom1-Tollip complex.</title>
        <authorList>
            <person name="Katoh Y."/>
            <person name="Imakagura H."/>
            <person name="Futatsumori M."/>
            <person name="Nakayama K."/>
        </authorList>
    </citation>
    <scope>FUNCTION</scope>
    <scope>INTERACTION WITH CLATHRIN AND TOLLIP</scope>
</reference>
<reference key="6">
    <citation type="journal article" date="2006" name="Mol. Cell. Biol.">
        <title>The adaptor protein Tom1L1 is a negative regulator of Src mitogenic signaling induced by growth factors.</title>
        <authorList>
            <person name="Franco M."/>
            <person name="Furstoss O."/>
            <person name="Simon V."/>
            <person name="Benistant C."/>
            <person name="Hong W.J."/>
            <person name="Roche S."/>
        </authorList>
    </citation>
    <scope>FUNCTION</scope>
    <scope>INTERACTION WITH SRC</scope>
</reference>
<reference key="7">
    <citation type="journal article" date="2008" name="Proc. Natl. Acad. Sci. U.S.A.">
        <title>A quantitative atlas of mitotic phosphorylation.</title>
        <authorList>
            <person name="Dephoure N."/>
            <person name="Zhou C."/>
            <person name="Villen J."/>
            <person name="Beausoleil S.A."/>
            <person name="Bakalarski C.E."/>
            <person name="Elledge S.J."/>
            <person name="Gygi S.P."/>
        </authorList>
    </citation>
    <scope>IDENTIFICATION BY MASS SPECTROMETRY [LARGE SCALE ANALYSIS]</scope>
    <source>
        <tissue>Cervix carcinoma</tissue>
    </source>
</reference>
<reference key="8">
    <citation type="journal article" date="2010" name="Sci. Signal.">
        <title>Quantitative phosphoproteomics reveals widespread full phosphorylation site occupancy during mitosis.</title>
        <authorList>
            <person name="Olsen J.V."/>
            <person name="Vermeulen M."/>
            <person name="Santamaria A."/>
            <person name="Kumar C."/>
            <person name="Miller M.L."/>
            <person name="Jensen L.J."/>
            <person name="Gnad F."/>
            <person name="Cox J."/>
            <person name="Jensen T.S."/>
            <person name="Nigg E.A."/>
            <person name="Brunak S."/>
            <person name="Mann M."/>
        </authorList>
    </citation>
    <scope>PHOSPHORYLATION [LARGE SCALE ANALYSIS] AT SER-160 AND THR-164</scope>
    <scope>IDENTIFICATION BY MASS SPECTROMETRY [LARGE SCALE ANALYSIS]</scope>
    <source>
        <tissue>Cervix carcinoma</tissue>
    </source>
</reference>
<reference key="9">
    <citation type="journal article" date="2012" name="Nat. Cell Biol.">
        <title>Autophagy receptors link myosin VI to autophagosomes to mediate Tom1-dependent autophagosome maturation and fusion with the lysosome.</title>
        <authorList>
            <person name="Tumbarello D.A."/>
            <person name="Waxse B.J."/>
            <person name="Arden S.D."/>
            <person name="Bright N.A."/>
            <person name="Kendrick-Jones J."/>
            <person name="Buss F."/>
        </authorList>
    </citation>
    <scope>FUNCTION</scope>
    <scope>INTERACTION WITH MYO6</scope>
</reference>
<reference key="10">
    <citation type="journal article" date="2014" name="J. Proteomics">
        <title>An enzyme assisted RP-RPLC approach for in-depth analysis of human liver phosphoproteome.</title>
        <authorList>
            <person name="Bian Y."/>
            <person name="Song C."/>
            <person name="Cheng K."/>
            <person name="Dong M."/>
            <person name="Wang F."/>
            <person name="Huang J."/>
            <person name="Sun D."/>
            <person name="Wang L."/>
            <person name="Ye M."/>
            <person name="Zou H."/>
        </authorList>
    </citation>
    <scope>IDENTIFICATION BY MASS SPECTROMETRY [LARGE SCALE ANALYSIS]</scope>
    <source>
        <tissue>Liver</tissue>
    </source>
</reference>
<evidence type="ECO:0000255" key="1">
    <source>
        <dbReference type="PROSITE-ProRule" id="PRU00218"/>
    </source>
</evidence>
<evidence type="ECO:0000255" key="2">
    <source>
        <dbReference type="PROSITE-ProRule" id="PRU00373"/>
    </source>
</evidence>
<evidence type="ECO:0000256" key="3">
    <source>
        <dbReference type="SAM" id="MobiDB-lite"/>
    </source>
</evidence>
<evidence type="ECO:0000269" key="4">
    <source>
    </source>
</evidence>
<evidence type="ECO:0000269" key="5">
    <source>
    </source>
</evidence>
<evidence type="ECO:0000269" key="6">
    <source>
    </source>
</evidence>
<evidence type="ECO:0000269" key="7">
    <source>
    </source>
</evidence>
<evidence type="ECO:0000303" key="8">
    <source>
    </source>
</evidence>
<evidence type="ECO:0000303" key="9">
    <source>
    </source>
</evidence>
<evidence type="ECO:0000303" key="10">
    <source>
    </source>
</evidence>
<evidence type="ECO:0000305" key="11"/>
<evidence type="ECO:0007744" key="12">
    <source>
    </source>
</evidence>
<feature type="chain" id="PRO_0000278790" description="TOM1-like protein 2">
    <location>
        <begin position="1"/>
        <end position="507"/>
    </location>
</feature>
<feature type="domain" description="VHS" evidence="1">
    <location>
        <begin position="20"/>
        <end position="152"/>
    </location>
</feature>
<feature type="domain" description="GAT" evidence="2">
    <location>
        <begin position="219"/>
        <end position="307"/>
    </location>
</feature>
<feature type="region of interest" description="Disordered" evidence="3">
    <location>
        <begin position="162"/>
        <end position="210"/>
    </location>
</feature>
<feature type="region of interest" description="Disordered" evidence="3">
    <location>
        <begin position="467"/>
        <end position="507"/>
    </location>
</feature>
<feature type="short sequence motif" description="Clathrin-binding">
    <location>
        <begin position="329"/>
        <end position="334"/>
    </location>
</feature>
<feature type="compositionally biased region" description="Basic and acidic residues" evidence="3">
    <location>
        <begin position="498"/>
        <end position="507"/>
    </location>
</feature>
<feature type="modified residue" description="Phosphoserine" evidence="12">
    <location>
        <position position="160"/>
    </location>
</feature>
<feature type="modified residue" description="Phosphothreonine" evidence="12">
    <location>
        <position position="164"/>
    </location>
</feature>
<feature type="splice variant" id="VSP_023390" description="In isoform 4." evidence="9">
    <location>
        <begin position="1"/>
        <end position="267"/>
    </location>
</feature>
<feature type="splice variant" id="VSP_023391" description="In isoform 2." evidence="10">
    <location>
        <begin position="73"/>
        <end position="122"/>
    </location>
</feature>
<feature type="splice variant" id="VSP_023392" description="In isoform 3." evidence="8 9">
    <location>
        <begin position="123"/>
        <end position="167"/>
    </location>
</feature>
<feature type="splice variant" id="VSP_057214" description="In isoform 5." evidence="9">
    <location>
        <begin position="168"/>
        <end position="220"/>
    </location>
</feature>
<feature type="splice variant" id="VSP_057215" description="In isoform 5." evidence="9">
    <original>G</original>
    <variation>GTFLSSAQKRGRGGESDLEPIDSWLITQGM</variation>
    <location>
        <position position="426"/>
    </location>
</feature>
<feature type="sequence conflict" description="In Ref. 1; AAL78338." evidence="11" ref="1">
    <original>P</original>
    <variation>A</variation>
    <location>
        <position position="12"/>
    </location>
</feature>
<feature type="sequence conflict" description="In Ref. 1; AAL78338." evidence="11" ref="1">
    <original>T</original>
    <variation>S</variation>
    <location>
        <position position="177"/>
    </location>
</feature>
<feature type="sequence conflict" description="In Ref. 1; AAL78338." evidence="11" ref="1">
    <original>N</original>
    <variation>S</variation>
    <location>
        <position position="323"/>
    </location>
</feature>
<feature type="sequence conflict" description="In Ref. 1; AAL78338." evidence="11" ref="1">
    <original>I</original>
    <variation>L</variation>
    <location>
        <position position="331"/>
    </location>
</feature>
<feature type="sequence conflict" description="In Ref. 1; AAL78338." evidence="11" ref="1">
    <original>N</original>
    <variation>S</variation>
    <location>
        <position position="347"/>
    </location>
</feature>
<feature type="sequence conflict" description="In Ref. 1; AAL78338." evidence="11" ref="1">
    <original>K</original>
    <variation>Q</variation>
    <location>
        <position position="400"/>
    </location>
</feature>
<feature type="sequence conflict" description="In Ref. 1; AAL78338." evidence="11" ref="1">
    <original>E</original>
    <variation>V</variation>
    <location>
        <position position="466"/>
    </location>
</feature>
<feature type="sequence conflict" description="In Ref. 1; AAL78338." evidence="11" ref="1">
    <original>P</original>
    <variation>H</variation>
    <location>
        <position position="475"/>
    </location>
</feature>
<proteinExistence type="evidence at protein level"/>
<organism>
    <name type="scientific">Homo sapiens</name>
    <name type="common">Human</name>
    <dbReference type="NCBI Taxonomy" id="9606"/>
    <lineage>
        <taxon>Eukaryota</taxon>
        <taxon>Metazoa</taxon>
        <taxon>Chordata</taxon>
        <taxon>Craniata</taxon>
        <taxon>Vertebrata</taxon>
        <taxon>Euteleostomi</taxon>
        <taxon>Mammalia</taxon>
        <taxon>Eutheria</taxon>
        <taxon>Euarchontoglires</taxon>
        <taxon>Primates</taxon>
        <taxon>Haplorrhini</taxon>
        <taxon>Catarrhini</taxon>
        <taxon>Hominidae</taxon>
        <taxon>Homo</taxon>
    </lineage>
</organism>
<gene>
    <name type="primary">TOM1L2</name>
</gene>
<protein>
    <recommendedName>
        <fullName>TOM1-like protein 2</fullName>
    </recommendedName>
    <alternativeName>
        <fullName>Target of Myb-like protein 2</fullName>
    </alternativeName>
</protein>
<accession>Q6ZVM7</accession>
<accession>B7Z2L7</accession>
<accession>B7Z7F4</accession>
<accession>Q86V61</accession>
<accession>Q8TDE7</accession>
<accession>Q96M88</accession>
<sequence length="507" mass="55556">MEFLLGNPFSTPVGQCLEKATDGSLQSEDWTLNMEICDIINETEEGPKDAIRALKKRLNGNRNYREVMLALTVLETCVKNCGHRFHILVANRDFIDSVLVKIISPKNNPPTIVQDKVLALIQAWADAFRSSPDLTGVVHIYEELKRKGVEFPMADLDALSPIHTPQRSVPEVDPAATMPRSQSQQRTSAGSYSSPPPAPYSAPQAPALSVTGPITANSEQIARLRSELDVVRGNTKVMSEMLTEMVPGQEDSSDLELLQELNRTCRAMQQRIVELISRVSNEEVTEELLHVNDDLNNVFLRYERFERYRSGRSVQNASNGVLNEVTEDNLIDLGPGSPAVVSPMVGNTAPPSSLSSQLAGLDLGTESVSGTLSSLQQCNPRDGFDMFAQTRGNSLAEQRKTVTYEDPQAVGGLASALDNRKQSSEGIPVAQPSVMDDIEVWLRTDLKGDDLEEGVTSEEFDKFLEERAKAAEMVPDLPSPPMEAPAPASNPSGRKKPERSEDALFAL</sequence>
<comment type="function">
    <text evidence="5 6 7">Acts as a MYO6/Myosin VI adapter protein that targets myosin VI to endocytic structures (PubMed:23023224). May also play a role in recruiting clathrin to endosomes (PubMed:16412388). May regulate growth factor-induced mitogenic signaling (PubMed:16479011).</text>
</comment>
<comment type="subunit">
    <text evidence="5 6 7">Interacts with clathrin, SRC and TOLLIP (PubMed:16412388, PubMed:16479011). Interacts with MYO6 (PubMed:23023224).</text>
</comment>
<comment type="interaction">
    <interactant intactId="EBI-3452240">
        <id>Q6ZVM7</id>
    </interactant>
    <interactant intactId="EBI-350606">
        <id>Q9UM54</id>
        <label>MYO6</label>
    </interactant>
    <organismsDiffer>false</organismsDiffer>
    <experiments>3</experiments>
</comment>
<comment type="interaction">
    <interactant intactId="EBI-3452240">
        <id>Q6ZVM7</id>
    </interactant>
    <interactant intactId="EBI-74615">
        <id>Q9H0E2</id>
        <label>TOLLIP</label>
    </interactant>
    <organismsDiffer>false</organismsDiffer>
    <experiments>4</experiments>
</comment>
<comment type="interaction">
    <interactant intactId="EBI-12147805">
        <id>Q6ZVM7-2</id>
    </interactant>
    <interactant intactId="EBI-10175124">
        <id>Q8IZU0</id>
        <label>FAM9B</label>
    </interactant>
    <organismsDiffer>false</organismsDiffer>
    <experiments>5</experiments>
</comment>
<comment type="interaction">
    <interactant intactId="EBI-12147805">
        <id>Q6ZVM7-2</id>
    </interactant>
    <interactant intactId="EBI-74615">
        <id>Q9H0E2</id>
        <label>TOLLIP</label>
    </interactant>
    <organismsDiffer>false</organismsDiffer>
    <experiments>7</experiments>
</comment>
<comment type="alternative products">
    <event type="alternative splicing"/>
    <isoform>
        <id>Q6ZVM7-1</id>
        <name>1</name>
        <sequence type="displayed"/>
    </isoform>
    <isoform>
        <id>Q6ZVM7-2</id>
        <name>2</name>
        <sequence type="described" ref="VSP_023391"/>
    </isoform>
    <isoform>
        <id>Q6ZVM7-3</id>
        <name>3</name>
        <sequence type="described" ref="VSP_023392"/>
    </isoform>
    <isoform>
        <id>Q6ZVM7-4</id>
        <name>4</name>
        <sequence type="described" ref="VSP_023390"/>
    </isoform>
    <isoform>
        <id>Q6ZVM7-5</id>
        <name>5</name>
        <sequence type="described" ref="VSP_057214 VSP_057215"/>
    </isoform>
</comment>
<comment type="tissue specificity">
    <text evidence="4">Ubiquitously expressed with higher expression in heart and skeletal muscle.</text>
</comment>
<comment type="domain">
    <text>The GAT domain mediates interaction with TOLLIP.</text>
</comment>
<comment type="similarity">
    <text evidence="11">Belongs to the TOM1 family.</text>
</comment>
<comment type="sequence caution" evidence="11">
    <conflict type="frameshift">
        <sequence resource="EMBL-CDS" id="AAL78338"/>
    </conflict>
</comment>